<reference key="1">
    <citation type="journal article" date="1996" name="Science">
        <title>Complete genome sequence of the methanogenic archaeon, Methanococcus jannaschii.</title>
        <authorList>
            <person name="Bult C.J."/>
            <person name="White O."/>
            <person name="Olsen G.J."/>
            <person name="Zhou L."/>
            <person name="Fleischmann R.D."/>
            <person name="Sutton G.G."/>
            <person name="Blake J.A."/>
            <person name="FitzGerald L.M."/>
            <person name="Clayton R.A."/>
            <person name="Gocayne J.D."/>
            <person name="Kerlavage A.R."/>
            <person name="Dougherty B.A."/>
            <person name="Tomb J.-F."/>
            <person name="Adams M.D."/>
            <person name="Reich C.I."/>
            <person name="Overbeek R."/>
            <person name="Kirkness E.F."/>
            <person name="Weinstock K.G."/>
            <person name="Merrick J.M."/>
            <person name="Glodek A."/>
            <person name="Scott J.L."/>
            <person name="Geoghagen N.S.M."/>
            <person name="Weidman J.F."/>
            <person name="Fuhrmann J.L."/>
            <person name="Nguyen D."/>
            <person name="Utterback T.R."/>
            <person name="Kelley J.M."/>
            <person name="Peterson J.D."/>
            <person name="Sadow P.W."/>
            <person name="Hanna M.C."/>
            <person name="Cotton M.D."/>
            <person name="Roberts K.M."/>
            <person name="Hurst M.A."/>
            <person name="Kaine B.P."/>
            <person name="Borodovsky M."/>
            <person name="Klenk H.-P."/>
            <person name="Fraser C.M."/>
            <person name="Smith H.O."/>
            <person name="Woese C.R."/>
            <person name="Venter J.C."/>
        </authorList>
    </citation>
    <scope>NUCLEOTIDE SEQUENCE [LARGE SCALE GENOMIC DNA]</scope>
    <source>
        <strain>ATCC 43067 / DSM 2661 / JAL-1 / JCM 10045 / NBRC 100440</strain>
    </source>
</reference>
<reference key="2">
    <citation type="journal article" date="2006" name="Biochemistry">
        <title>Methylglyoxal is an intermediate in the biosynthesis of 6-deoxy-5-ketofructose-1-phosphate: a precursor for aromatic amino acid biosynthesis in Methanocaldococcus jannaschii.</title>
        <authorList>
            <person name="White R.H."/>
            <person name="Xu H."/>
        </authorList>
    </citation>
    <scope>FUNCTION AS AN URIDYLYLTRANSFERASE</scope>
</reference>
<reference key="3">
    <citation type="journal article" date="2008" name="J. Bacteriol.">
        <title>Acetamido sugar biosynthesis in the Euryarchaea.</title>
        <authorList>
            <person name="Namboori S.C."/>
            <person name="Graham D.E."/>
        </authorList>
    </citation>
    <scope>FUNCTION AS A PYROPHOSPHORYLASE AND ACETYLTRANSFERASE</scope>
    <scope>CATALYTIC ACTIVITY</scope>
    <scope>SUBSTRATE SPECIFICITY</scope>
    <scope>BIOPHYSICOCHEMICAL PROPERTIES</scope>
    <source>
        <strain>900</strain>
    </source>
</reference>
<proteinExistence type="evidence at protein level"/>
<gene>
    <name type="primary">glmU</name>
    <name type="ordered locus">MJ1101</name>
</gene>
<accession>Q58501</accession>
<feature type="chain" id="PRO_0000068761" description="Bifunctional protein GlmU">
    <location>
        <begin position="1"/>
        <end position="408"/>
    </location>
</feature>
<feature type="region of interest" description="Pyrophosphorylase">
    <location>
        <begin position="1"/>
        <end position="202"/>
    </location>
</feature>
<feature type="region of interest" description="Linker">
    <location>
        <begin position="203"/>
        <end position="222"/>
    </location>
</feature>
<feature type="region of interest" description="N-acetyltransferase">
    <location>
        <begin position="223"/>
        <end position="408"/>
    </location>
</feature>
<feature type="active site" description="Proton acceptor" evidence="1">
    <location>
        <position position="306"/>
    </location>
</feature>
<feature type="binding site" evidence="1">
    <location>
        <begin position="6"/>
        <end position="9"/>
    </location>
    <ligand>
        <name>UTP</name>
        <dbReference type="ChEBI" id="CHEBI:46398"/>
    </ligand>
</feature>
<feature type="binding site" evidence="1">
    <location>
        <position position="74"/>
    </location>
    <ligand>
        <name>UTP</name>
        <dbReference type="ChEBI" id="CHEBI:46398"/>
    </ligand>
</feature>
<feature type="binding site" evidence="1">
    <location>
        <position position="79"/>
    </location>
    <ligand>
        <name>UTP</name>
        <dbReference type="ChEBI" id="CHEBI:46398"/>
    </ligand>
</feature>
<feature type="binding site" evidence="1">
    <location>
        <position position="80"/>
    </location>
    <ligand>
        <name>N-acetyl-alpha-D-glucosamine 1-phosphate</name>
        <dbReference type="ChEBI" id="CHEBI:57776"/>
    </ligand>
</feature>
<feature type="binding site" evidence="1">
    <location>
        <position position="130"/>
    </location>
    <ligand>
        <name>N-acetyl-alpha-D-glucosamine 1-phosphate</name>
        <dbReference type="ChEBI" id="CHEBI:57776"/>
    </ligand>
</feature>
<feature type="binding site" evidence="1">
    <location>
        <position position="142"/>
    </location>
    <ligand>
        <name>N-acetyl-alpha-D-glucosamine 1-phosphate</name>
        <dbReference type="ChEBI" id="CHEBI:57776"/>
    </ligand>
</feature>
<feature type="binding site" evidence="1">
    <location>
        <position position="156"/>
    </location>
    <ligand>
        <name>N-acetyl-alpha-D-glucosamine 1-phosphate</name>
        <dbReference type="ChEBI" id="CHEBI:57776"/>
    </ligand>
</feature>
<feature type="binding site" evidence="1">
    <location>
        <position position="382"/>
    </location>
    <ligand>
        <name>acetyl-CoA</name>
        <dbReference type="ChEBI" id="CHEBI:57288"/>
    </ligand>
</feature>
<feature type="binding site" evidence="1">
    <location>
        <position position="399"/>
    </location>
    <ligand>
        <name>acetyl-CoA</name>
        <dbReference type="ChEBI" id="CHEBI:57288"/>
    </ligand>
</feature>
<keyword id="KW-0012">Acyltransferase</keyword>
<keyword id="KW-0511">Multifunctional enzyme</keyword>
<keyword id="KW-0548">Nucleotidyltransferase</keyword>
<keyword id="KW-1185">Reference proteome</keyword>
<keyword id="KW-0677">Repeat</keyword>
<keyword id="KW-0808">Transferase</keyword>
<sequence length="408" mass="46056">MDAIILCAGKGERLRPLTENRPKPMIPIAGKPILQHIIEKVEDLVDNIYLIVKYKKEKIVDYFKNHPKIKFLEQGEIDGTGQAVLTAKDYVDDEFLVINGDIIFEDDLEEFLKYKYAVAVKEVKNPENFGVVVLDDENNIIELQEKPENPKSNLINAGIYKFDKKIFELIEKTKISERGERELTDAIKHLIKEEKVKGIKLNGYWNDVGRPWDILEANKYLLDKINTDIKGKIEENVVIKGEVIIEEGAIVKANSVIEGPAIIKKGAVVGPLAYIRPYTVLMENTFVGNSSEVKASIIMKNTKIPHLSYVGDSIIGENCNFGCNTITANLRFDDKPVKVNIKSKRVESVRKLGVIMGDNVKTGIQVSFMPGVKVGSNCWIGASCLIDRDIESNTFVYKRDELIFRKLK</sequence>
<dbReference type="EC" id="2.7.7.23"/>
<dbReference type="EC" id="2.3.1.157"/>
<dbReference type="EMBL" id="L77117">
    <property type="protein sequence ID" value="AAB99104.1"/>
    <property type="molecule type" value="Genomic_DNA"/>
</dbReference>
<dbReference type="PIR" id="D64437">
    <property type="entry name" value="D64437"/>
</dbReference>
<dbReference type="RefSeq" id="WP_010870613.1">
    <property type="nucleotide sequence ID" value="NC_000909.1"/>
</dbReference>
<dbReference type="SMR" id="Q58501"/>
<dbReference type="FunCoup" id="Q58501">
    <property type="interactions" value="93"/>
</dbReference>
<dbReference type="STRING" id="243232.MJ_1101"/>
<dbReference type="PaxDb" id="243232-MJ_1101"/>
<dbReference type="EnsemblBacteria" id="AAB99104">
    <property type="protein sequence ID" value="AAB99104"/>
    <property type="gene ID" value="MJ_1101"/>
</dbReference>
<dbReference type="GeneID" id="1451998"/>
<dbReference type="KEGG" id="mja:MJ_1101"/>
<dbReference type="eggNOG" id="arCOG00666">
    <property type="taxonomic scope" value="Archaea"/>
</dbReference>
<dbReference type="HOGENOM" id="CLU_029499_0_1_2"/>
<dbReference type="InParanoid" id="Q58501"/>
<dbReference type="OrthoDB" id="15372at2157"/>
<dbReference type="PhylomeDB" id="Q58501"/>
<dbReference type="UniPathway" id="UPA00113">
    <property type="reaction ID" value="UER00532"/>
</dbReference>
<dbReference type="UniPathway" id="UPA00113">
    <property type="reaction ID" value="UER00533"/>
</dbReference>
<dbReference type="Proteomes" id="UP000000805">
    <property type="component" value="Chromosome"/>
</dbReference>
<dbReference type="GO" id="GO:0019134">
    <property type="term" value="F:glucosamine-1-phosphate N-acetyltransferase activity"/>
    <property type="evidence" value="ECO:0000314"/>
    <property type="project" value="UniProtKB"/>
</dbReference>
<dbReference type="GO" id="GO:0003977">
    <property type="term" value="F:UDP-N-acetylglucosamine diphosphorylase activity"/>
    <property type="evidence" value="ECO:0000314"/>
    <property type="project" value="UniProtKB"/>
</dbReference>
<dbReference type="GO" id="GO:0006048">
    <property type="term" value="P:UDP-N-acetylglucosamine biosynthetic process"/>
    <property type="evidence" value="ECO:0007669"/>
    <property type="project" value="UniProtKB-UniPathway"/>
</dbReference>
<dbReference type="CDD" id="cd05636">
    <property type="entry name" value="LbH_G1P_TT_C_like"/>
    <property type="match status" value="1"/>
</dbReference>
<dbReference type="CDD" id="cd04181">
    <property type="entry name" value="NTP_transferase"/>
    <property type="match status" value="1"/>
</dbReference>
<dbReference type="FunFam" id="3.90.550.10:FF:000013">
    <property type="entry name" value="mannose-1-phosphate guanyltransferase beta"/>
    <property type="match status" value="1"/>
</dbReference>
<dbReference type="FunFam" id="2.160.10.10:FF:000079">
    <property type="entry name" value="Nucleotidyl transferase"/>
    <property type="match status" value="1"/>
</dbReference>
<dbReference type="Gene3D" id="2.160.10.10">
    <property type="entry name" value="Hexapeptide repeat proteins"/>
    <property type="match status" value="1"/>
</dbReference>
<dbReference type="Gene3D" id="3.90.550.10">
    <property type="entry name" value="Spore Coat Polysaccharide Biosynthesis Protein SpsA, Chain A"/>
    <property type="match status" value="1"/>
</dbReference>
<dbReference type="InterPro" id="IPR023915">
    <property type="entry name" value="Bifunctiontional_GlmU_arc-type"/>
</dbReference>
<dbReference type="InterPro" id="IPR050065">
    <property type="entry name" value="GlmU-like"/>
</dbReference>
<dbReference type="InterPro" id="IPR005835">
    <property type="entry name" value="NTP_transferase_dom"/>
</dbReference>
<dbReference type="InterPro" id="IPR029044">
    <property type="entry name" value="Nucleotide-diphossugar_trans"/>
</dbReference>
<dbReference type="InterPro" id="IPR011004">
    <property type="entry name" value="Trimer_LpxA-like_sf"/>
</dbReference>
<dbReference type="NCBIfam" id="TIGR03992">
    <property type="entry name" value="Arch_glmU"/>
    <property type="match status" value="1"/>
</dbReference>
<dbReference type="PANTHER" id="PTHR43584:SF8">
    <property type="entry name" value="N-ACETYLMURAMATE ALPHA-1-PHOSPHATE URIDYLYLTRANSFERASE"/>
    <property type="match status" value="1"/>
</dbReference>
<dbReference type="PANTHER" id="PTHR43584">
    <property type="entry name" value="NUCLEOTIDYL TRANSFERASE"/>
    <property type="match status" value="1"/>
</dbReference>
<dbReference type="Pfam" id="PF00483">
    <property type="entry name" value="NTP_transferase"/>
    <property type="match status" value="1"/>
</dbReference>
<dbReference type="SUPFAM" id="SSF53448">
    <property type="entry name" value="Nucleotide-diphospho-sugar transferases"/>
    <property type="match status" value="1"/>
</dbReference>
<dbReference type="SUPFAM" id="SSF51161">
    <property type="entry name" value="Trimeric LpxA-like enzymes"/>
    <property type="match status" value="1"/>
</dbReference>
<comment type="function">
    <text evidence="2 3">Catalyzes the last two sequential reactions in the de novo biosynthetic pathway for UDP-N-acetyl-glucosamine (UDP-GlcNAc). Responsible for the acetylation of GlcN-1-P to GlcNAc-1-P, and for the uridyl transfer from UTP to GlcNAc-1-P, to produce UDP-GlcNAc and pyrophosphate. Also catalyzes the reverse reaction, i.e. the cleavage of UDP-GlcNAc with pyrophosphate to form UTP and GlcNAc-1-P. To a lesser extent, is also able to use dUTP or dTTP as the nucleotide substrate, but not CTP, ATP or GTP.</text>
</comment>
<comment type="catalytic activity">
    <reaction evidence="3">
        <text>N-acetyl-alpha-D-glucosamine 1-phosphate + UTP + H(+) = UDP-N-acetyl-alpha-D-glucosamine + diphosphate</text>
        <dbReference type="Rhea" id="RHEA:13509"/>
        <dbReference type="ChEBI" id="CHEBI:15378"/>
        <dbReference type="ChEBI" id="CHEBI:33019"/>
        <dbReference type="ChEBI" id="CHEBI:46398"/>
        <dbReference type="ChEBI" id="CHEBI:57705"/>
        <dbReference type="ChEBI" id="CHEBI:57776"/>
        <dbReference type="EC" id="2.7.7.23"/>
    </reaction>
</comment>
<comment type="catalytic activity">
    <reaction evidence="3">
        <text>alpha-D-glucosamine 1-phosphate + acetyl-CoA = N-acetyl-alpha-D-glucosamine 1-phosphate + CoA + H(+)</text>
        <dbReference type="Rhea" id="RHEA:13725"/>
        <dbReference type="ChEBI" id="CHEBI:15378"/>
        <dbReference type="ChEBI" id="CHEBI:57287"/>
        <dbReference type="ChEBI" id="CHEBI:57288"/>
        <dbReference type="ChEBI" id="CHEBI:57776"/>
        <dbReference type="ChEBI" id="CHEBI:58516"/>
        <dbReference type="EC" id="2.3.1.157"/>
    </reaction>
</comment>
<comment type="biophysicochemical properties">
    <phDependence>
        <text evidence="3">Optimum pH is 7.5.</text>
    </phDependence>
    <temperatureDependence>
        <text evidence="3">Optimum temperature is 50-60 degrees Celsius. Activity is 22% lower at 60 degrees Celsius and 60% lower at 100 degrees. Thermostable.</text>
    </temperatureDependence>
</comment>
<comment type="pathway">
    <text>Nucleotide-sugar biosynthesis; UDP-N-acetyl-alpha-D-glucosamine biosynthesis; N-acetyl-alpha-D-glucosamine 1-phosphate from alpha-D-glucosamine 6-phosphate (route II): step 2/2.</text>
</comment>
<comment type="pathway">
    <text>Nucleotide-sugar biosynthesis; UDP-N-acetyl-alpha-D-glucosamine biosynthesis; UDP-N-acetyl-alpha-D-glucosamine from N-acetyl-alpha-D-glucosamine 1-phosphate: step 1/1.</text>
</comment>
<comment type="similarity">
    <text evidence="4">In the N-terminal section; belongs to the N-acetylglucosamine-1-phosphate uridyltransferase family.</text>
</comment>
<comment type="similarity">
    <text evidence="4">In the C-terminal section; belongs to the transferase hexapeptide repeat family.</text>
</comment>
<organism>
    <name type="scientific">Methanocaldococcus jannaschii (strain ATCC 43067 / DSM 2661 / JAL-1 / JCM 10045 / NBRC 100440)</name>
    <name type="common">Methanococcus jannaschii</name>
    <dbReference type="NCBI Taxonomy" id="243232"/>
    <lineage>
        <taxon>Archaea</taxon>
        <taxon>Methanobacteriati</taxon>
        <taxon>Methanobacteriota</taxon>
        <taxon>Methanomada group</taxon>
        <taxon>Methanococci</taxon>
        <taxon>Methanococcales</taxon>
        <taxon>Methanocaldococcaceae</taxon>
        <taxon>Methanocaldococcus</taxon>
    </lineage>
</organism>
<name>GLMU_METJA</name>
<evidence type="ECO:0000250" key="1"/>
<evidence type="ECO:0000269" key="2">
    <source>
    </source>
</evidence>
<evidence type="ECO:0000269" key="3">
    <source>
    </source>
</evidence>
<evidence type="ECO:0000305" key="4"/>
<protein>
    <recommendedName>
        <fullName>Bifunctional protein GlmU</fullName>
    </recommendedName>
    <domain>
        <recommendedName>
            <fullName>UDP-N-acetylglucosamine pyrophosphorylase</fullName>
            <ecNumber>2.7.7.23</ecNumber>
        </recommendedName>
        <alternativeName>
            <fullName>N-acetylglucosamine-1-phosphate uridyltransferase</fullName>
        </alternativeName>
    </domain>
    <domain>
        <recommendedName>
            <fullName>Glucosamine-1-phosphate N-acetyltransferase</fullName>
            <ecNumber>2.3.1.157</ecNumber>
        </recommendedName>
    </domain>
</protein>